<accession>Q8ZLQ7</accession>
<gene>
    <name type="primary">nanE2</name>
    <name type="ordered locus">STM3337</name>
</gene>
<evidence type="ECO:0000305" key="1"/>
<evidence type="ECO:0007829" key="2">
    <source>
        <dbReference type="PDB" id="3IGS"/>
    </source>
</evidence>
<reference key="1">
    <citation type="journal article" date="2001" name="Nature">
        <title>Complete genome sequence of Salmonella enterica serovar Typhimurium LT2.</title>
        <authorList>
            <person name="McClelland M."/>
            <person name="Sanderson K.E."/>
            <person name="Spieth J."/>
            <person name="Clifton S.W."/>
            <person name="Latreille P."/>
            <person name="Courtney L."/>
            <person name="Porwollik S."/>
            <person name="Ali J."/>
            <person name="Dante M."/>
            <person name="Du F."/>
            <person name="Hou S."/>
            <person name="Layman D."/>
            <person name="Leonard S."/>
            <person name="Nguyen C."/>
            <person name="Scott K."/>
            <person name="Holmes A."/>
            <person name="Grewal N."/>
            <person name="Mulvaney E."/>
            <person name="Ryan E."/>
            <person name="Sun H."/>
            <person name="Florea L."/>
            <person name="Miller W."/>
            <person name="Stoneking T."/>
            <person name="Nhan M."/>
            <person name="Waterston R."/>
            <person name="Wilson R.K."/>
        </authorList>
    </citation>
    <scope>NUCLEOTIDE SEQUENCE [LARGE SCALE GENOMIC DNA]</scope>
    <source>
        <strain>LT2 / SGSC1412 / ATCC 700720</strain>
    </source>
</reference>
<keyword id="KW-0002">3D-structure</keyword>
<keyword id="KW-0119">Carbohydrate metabolism</keyword>
<keyword id="KW-0413">Isomerase</keyword>
<keyword id="KW-1185">Reference proteome</keyword>
<name>NANE2_SALTY</name>
<dbReference type="EC" id="5.1.3.9"/>
<dbReference type="EMBL" id="AE006468">
    <property type="protein sequence ID" value="AAL22206.1"/>
    <property type="molecule type" value="Genomic_DNA"/>
</dbReference>
<dbReference type="RefSeq" id="WP_000054441.1">
    <property type="nucleotide sequence ID" value="NC_003197.2"/>
</dbReference>
<dbReference type="PDB" id="3IGS">
    <property type="method" value="X-ray"/>
    <property type="resolution" value="1.50 A"/>
    <property type="chains" value="A/B=1-229"/>
</dbReference>
<dbReference type="PDBsum" id="3IGS"/>
<dbReference type="SMR" id="Q8ZLQ7"/>
<dbReference type="STRING" id="99287.STM3337"/>
<dbReference type="PaxDb" id="99287-STM3337"/>
<dbReference type="KEGG" id="stm:STM3337"/>
<dbReference type="PATRIC" id="fig|99287.12.peg.3538"/>
<dbReference type="HOGENOM" id="CLU_086300_0_0_6"/>
<dbReference type="OMA" id="TRPMEIT"/>
<dbReference type="PhylomeDB" id="Q8ZLQ7"/>
<dbReference type="BioCyc" id="SENT99287:STM3337-MONOMER"/>
<dbReference type="UniPathway" id="UPA00629">
    <property type="reaction ID" value="UER00682"/>
</dbReference>
<dbReference type="EvolutionaryTrace" id="Q8ZLQ7"/>
<dbReference type="Proteomes" id="UP000001014">
    <property type="component" value="Chromosome"/>
</dbReference>
<dbReference type="GO" id="GO:0005829">
    <property type="term" value="C:cytosol"/>
    <property type="evidence" value="ECO:0000318"/>
    <property type="project" value="GO_Central"/>
</dbReference>
<dbReference type="GO" id="GO:0047465">
    <property type="term" value="F:N-acylglucosamine-6-phosphate 2-epimerase activity"/>
    <property type="evidence" value="ECO:0007669"/>
    <property type="project" value="UniProtKB-EC"/>
</dbReference>
<dbReference type="GO" id="GO:0005975">
    <property type="term" value="P:carbohydrate metabolic process"/>
    <property type="evidence" value="ECO:0007669"/>
    <property type="project" value="UniProtKB-UniRule"/>
</dbReference>
<dbReference type="GO" id="GO:0006053">
    <property type="term" value="P:N-acetylmannosamine catabolic process"/>
    <property type="evidence" value="ECO:0000318"/>
    <property type="project" value="GO_Central"/>
</dbReference>
<dbReference type="GO" id="GO:0019262">
    <property type="term" value="P:N-acetylneuraminate catabolic process"/>
    <property type="evidence" value="ECO:0000318"/>
    <property type="project" value="GO_Central"/>
</dbReference>
<dbReference type="CDD" id="cd04729">
    <property type="entry name" value="NanE"/>
    <property type="match status" value="1"/>
</dbReference>
<dbReference type="FunFam" id="3.20.20.70:FF:000035">
    <property type="entry name" value="Putative N-acetylmannosamine-6-phosphate 2-epimerase"/>
    <property type="match status" value="1"/>
</dbReference>
<dbReference type="Gene3D" id="3.20.20.70">
    <property type="entry name" value="Aldolase class I"/>
    <property type="match status" value="1"/>
</dbReference>
<dbReference type="HAMAP" id="MF_01235">
    <property type="entry name" value="ManNAc6P_epimer"/>
    <property type="match status" value="1"/>
</dbReference>
<dbReference type="InterPro" id="IPR013785">
    <property type="entry name" value="Aldolase_TIM"/>
</dbReference>
<dbReference type="InterPro" id="IPR007260">
    <property type="entry name" value="NanE"/>
</dbReference>
<dbReference type="InterPro" id="IPR011060">
    <property type="entry name" value="RibuloseP-bd_barrel"/>
</dbReference>
<dbReference type="NCBIfam" id="NF002231">
    <property type="entry name" value="PRK01130.1"/>
    <property type="match status" value="1"/>
</dbReference>
<dbReference type="PANTHER" id="PTHR36204">
    <property type="entry name" value="N-ACETYLMANNOSAMINE-6-PHOSPHATE 2-EPIMERASE-RELATED"/>
    <property type="match status" value="1"/>
</dbReference>
<dbReference type="PANTHER" id="PTHR36204:SF1">
    <property type="entry name" value="N-ACETYLMANNOSAMINE-6-PHOSPHATE 2-EPIMERASE-RELATED"/>
    <property type="match status" value="1"/>
</dbReference>
<dbReference type="Pfam" id="PF04131">
    <property type="entry name" value="NanE"/>
    <property type="match status" value="1"/>
</dbReference>
<dbReference type="SUPFAM" id="SSF51366">
    <property type="entry name" value="Ribulose-phoshate binding barrel"/>
    <property type="match status" value="1"/>
</dbReference>
<proteinExistence type="evidence at protein level"/>
<organism>
    <name type="scientific">Salmonella typhimurium (strain LT2 / SGSC1412 / ATCC 700720)</name>
    <dbReference type="NCBI Taxonomy" id="99287"/>
    <lineage>
        <taxon>Bacteria</taxon>
        <taxon>Pseudomonadati</taxon>
        <taxon>Pseudomonadota</taxon>
        <taxon>Gammaproteobacteria</taxon>
        <taxon>Enterobacterales</taxon>
        <taxon>Enterobacteriaceae</taxon>
        <taxon>Salmonella</taxon>
    </lineage>
</organism>
<protein>
    <recommendedName>
        <fullName>Putative N-acetylmannosamine-6-phosphate 2-epimerase 2</fullName>
        <ecNumber>5.1.3.9</ecNumber>
    </recommendedName>
    <alternativeName>
        <fullName>ManNAc-6-P epimerase 2</fullName>
    </alternativeName>
</protein>
<feature type="chain" id="PRO_0000179795" description="Putative N-acetylmannosamine-6-phosphate 2-epimerase 2">
    <location>
        <begin position="1"/>
        <end position="229"/>
    </location>
</feature>
<feature type="helix" evidence="2">
    <location>
        <begin position="3"/>
        <end position="14"/>
    </location>
</feature>
<feature type="strand" evidence="2">
    <location>
        <begin position="17"/>
        <end position="20"/>
    </location>
</feature>
<feature type="helix" evidence="2">
    <location>
        <begin position="32"/>
        <end position="44"/>
    </location>
</feature>
<feature type="strand" evidence="2">
    <location>
        <begin position="48"/>
        <end position="54"/>
    </location>
</feature>
<feature type="helix" evidence="2">
    <location>
        <begin position="55"/>
        <end position="62"/>
    </location>
</feature>
<feature type="strand" evidence="2">
    <location>
        <begin position="69"/>
        <end position="72"/>
    </location>
</feature>
<feature type="helix" evidence="2">
    <location>
        <begin position="88"/>
        <end position="97"/>
    </location>
</feature>
<feature type="strand" evidence="2">
    <location>
        <begin position="100"/>
        <end position="105"/>
    </location>
</feature>
<feature type="helix" evidence="2">
    <location>
        <begin position="115"/>
        <end position="124"/>
    </location>
</feature>
<feature type="strand" evidence="2">
    <location>
        <begin position="128"/>
        <end position="132"/>
    </location>
</feature>
<feature type="helix" evidence="2">
    <location>
        <begin position="136"/>
        <end position="144"/>
    </location>
</feature>
<feature type="strand" evidence="2">
    <location>
        <begin position="148"/>
        <end position="151"/>
    </location>
</feature>
<feature type="turn" evidence="2">
    <location>
        <begin position="153"/>
        <end position="156"/>
    </location>
</feature>
<feature type="strand" evidence="2">
    <location>
        <begin position="157"/>
        <end position="161"/>
    </location>
</feature>
<feature type="helix" evidence="2">
    <location>
        <begin position="168"/>
        <end position="176"/>
    </location>
</feature>
<feature type="strand" evidence="2">
    <location>
        <begin position="181"/>
        <end position="185"/>
    </location>
</feature>
<feature type="helix" evidence="2">
    <location>
        <begin position="190"/>
        <end position="198"/>
    </location>
</feature>
<feature type="strand" evidence="2">
    <location>
        <begin position="202"/>
        <end position="206"/>
    </location>
</feature>
<feature type="helix" evidence="2">
    <location>
        <begin position="208"/>
        <end position="211"/>
    </location>
</feature>
<feature type="helix" evidence="2">
    <location>
        <begin position="213"/>
        <end position="228"/>
    </location>
</feature>
<sequence length="229" mass="24030">MSLLEQLDKNIAASGGLIVSCQPVPGSPLDKPEIVAAMALAAEQAGAVAVRIEGIDNLRMTRSLVSVPIIGIIKRDLDESPVRITPFLDDVDALAQAGAAIIAVDGTARQRPVAVEALLARIHHHHLLAMADCSSVDDGLACQRLGADIIGTTMSGYTTPDTPEEPDLPLVKALHDAGCRVIAEGRYNSPALAAEAIRYGAWAVTVGSAITRLEHICGWYNDALKKAAS</sequence>
<comment type="function">
    <text evidence="1">Converts N-acetylmannosamine-6-phosphate (ManNAc-6-P) to N-acetylglucosamine-6-phosphate (GlcNAc-6-P).</text>
</comment>
<comment type="catalytic activity">
    <reaction>
        <text>an N-acyl-D-glucosamine 6-phosphate = an N-acyl-D-mannosamine 6-phosphate</text>
        <dbReference type="Rhea" id="RHEA:23932"/>
        <dbReference type="ChEBI" id="CHEBI:57599"/>
        <dbReference type="ChEBI" id="CHEBI:57666"/>
        <dbReference type="EC" id="5.1.3.9"/>
    </reaction>
</comment>
<comment type="pathway">
    <text>Amino-sugar metabolism; N-acetylneuraminate degradation; D-fructose 6-phosphate from N-acetylneuraminate: step 3/5.</text>
</comment>
<comment type="similarity">
    <text evidence="1">Belongs to the NanE family.</text>
</comment>